<organism>
    <name type="scientific">Mus musculus</name>
    <name type="common">Mouse</name>
    <dbReference type="NCBI Taxonomy" id="10090"/>
    <lineage>
        <taxon>Eukaryota</taxon>
        <taxon>Metazoa</taxon>
        <taxon>Chordata</taxon>
        <taxon>Craniata</taxon>
        <taxon>Vertebrata</taxon>
        <taxon>Euteleostomi</taxon>
        <taxon>Mammalia</taxon>
        <taxon>Eutheria</taxon>
        <taxon>Euarchontoglires</taxon>
        <taxon>Glires</taxon>
        <taxon>Rodentia</taxon>
        <taxon>Myomorpha</taxon>
        <taxon>Muroidea</taxon>
        <taxon>Muridae</taxon>
        <taxon>Murinae</taxon>
        <taxon>Mus</taxon>
        <taxon>Mus</taxon>
    </lineage>
</organism>
<name>KAT2B_MOUSE</name>
<protein>
    <recommendedName>
        <fullName>Histone acetyltransferase KAT2B</fullName>
        <ecNumber evidence="2">2.3.1.48</ecNumber>
    </recommendedName>
    <alternativeName>
        <fullName evidence="11">Histone acetyltransferase PCAF</fullName>
        <shortName evidence="11">Histone acetylase PCAF</shortName>
    </alternativeName>
    <alternativeName>
        <fullName evidence="12">Lysine acetyltransferase 2B</fullName>
    </alternativeName>
    <alternativeName>
        <fullName evidence="11">P300/CBP-associated factor</fullName>
        <shortName evidence="11">P/CAF</shortName>
    </alternativeName>
    <alternativeName>
        <fullName>Spermidine acetyltransferase KAT2B</fullName>
        <ecNumber evidence="2">2.3.1.57</ecNumber>
    </alternativeName>
</protein>
<feature type="chain" id="PRO_0000322986" description="Histone acetyltransferase KAT2B">
    <location>
        <begin position="1"/>
        <end position="813"/>
    </location>
</feature>
<feature type="domain" description="N-acetyltransferase" evidence="4">
    <location>
        <begin position="484"/>
        <end position="632"/>
    </location>
</feature>
<feature type="domain" description="Bromo" evidence="3">
    <location>
        <begin position="704"/>
        <end position="808"/>
    </location>
</feature>
<feature type="region of interest" description="Disordered" evidence="5">
    <location>
        <begin position="1"/>
        <end position="55"/>
    </location>
</feature>
<feature type="region of interest" description="Disordered" evidence="5">
    <location>
        <begin position="380"/>
        <end position="423"/>
    </location>
</feature>
<feature type="compositionally biased region" description="Low complexity" evidence="5">
    <location>
        <begin position="32"/>
        <end position="46"/>
    </location>
</feature>
<feature type="compositionally biased region" description="Polar residues" evidence="5">
    <location>
        <begin position="380"/>
        <end position="391"/>
    </location>
</feature>
<feature type="compositionally biased region" description="Basic and acidic residues" evidence="5">
    <location>
        <begin position="406"/>
        <end position="423"/>
    </location>
</feature>
<feature type="active site" description="Proton donor/acceptor" evidence="1">
    <location>
        <position position="551"/>
    </location>
</feature>
<feature type="binding site" evidence="1">
    <location>
        <begin position="555"/>
        <end position="557"/>
    </location>
    <ligand>
        <name>acetyl-CoA</name>
        <dbReference type="ChEBI" id="CHEBI:57288"/>
    </ligand>
</feature>
<feature type="binding site" evidence="1">
    <location>
        <begin position="562"/>
        <end position="568"/>
    </location>
    <ligand>
        <name>acetyl-CoA</name>
        <dbReference type="ChEBI" id="CHEBI:57288"/>
    </ligand>
</feature>
<feature type="binding site" evidence="1">
    <location>
        <begin position="593"/>
        <end position="596"/>
    </location>
    <ligand>
        <name>acetyl-CoA</name>
        <dbReference type="ChEBI" id="CHEBI:57288"/>
    </ligand>
</feature>
<feature type="sequence conflict" description="In Ref. 1; AAF70498." evidence="12" ref="1">
    <original>LL</original>
    <variation>FV</variation>
    <location>
        <begin position="293"/>
        <end position="294"/>
    </location>
</feature>
<feature type="sequence conflict" description="In Ref. 2; BAE33658." evidence="12" ref="2">
    <original>E</original>
    <variation>G</variation>
    <location>
        <position position="319"/>
    </location>
</feature>
<feature type="sequence conflict" description="In Ref. 1; AAF70498." evidence="12" ref="1">
    <original>H</original>
    <variation>L</variation>
    <location>
        <position position="459"/>
    </location>
</feature>
<feature type="sequence conflict" description="In Ref. 1; AAF70498." evidence="12" ref="1">
    <original>G</original>
    <variation>A</variation>
    <location>
        <position position="548"/>
    </location>
</feature>
<feature type="sequence conflict" description="In Ref. 1; AAF70498." evidence="12" ref="1">
    <original>F</original>
    <variation>L</variation>
    <location>
        <position position="554"/>
    </location>
</feature>
<feature type="helix" evidence="14">
    <location>
        <begin position="707"/>
        <end position="722"/>
    </location>
</feature>
<feature type="helix" evidence="14">
    <location>
        <begin position="727"/>
        <end position="729"/>
    </location>
</feature>
<feature type="turn" evidence="14">
    <location>
        <begin position="735"/>
        <end position="737"/>
    </location>
</feature>
<feature type="helix" evidence="14">
    <location>
        <begin position="741"/>
        <end position="744"/>
    </location>
</feature>
<feature type="helix" evidence="14">
    <location>
        <begin position="751"/>
        <end position="759"/>
    </location>
</feature>
<feature type="helix" evidence="14">
    <location>
        <begin position="766"/>
        <end position="783"/>
    </location>
</feature>
<feature type="helix" evidence="14">
    <location>
        <begin position="789"/>
        <end position="807"/>
    </location>
</feature>
<keyword id="KW-0002">3D-structure</keyword>
<keyword id="KW-0010">Activator</keyword>
<keyword id="KW-0012">Acyltransferase</keyword>
<keyword id="KW-0090">Biological rhythms</keyword>
<keyword id="KW-0103">Bromodomain</keyword>
<keyword id="KW-0131">Cell cycle</keyword>
<keyword id="KW-0963">Cytoplasm</keyword>
<keyword id="KW-0206">Cytoskeleton</keyword>
<keyword id="KW-0539">Nucleus</keyword>
<keyword id="KW-1185">Reference proteome</keyword>
<keyword id="KW-0804">Transcription</keyword>
<keyword id="KW-0805">Transcription regulation</keyword>
<keyword id="KW-0808">Transferase</keyword>
<comment type="function">
    <text evidence="2">Functions as a histone acetyltransferase (HAT) to promote transcriptional activation. Has significant histone acetyltransferase activity with core histones (H3 and H4), and also with nucleosome core particles. Has a a strong preference for acetylation of H3 at 'Lys-9' (H3K9ac). Also acetylates non-histone proteins, such as ACLY, MAPRE1/EB1, PLK4, RRP9/U3-55K and TBX5. Acts as a circadian transcriptional coactivator which enhances the activity of the circadian transcriptional activators: NPAS2-BMAL1 and CLOCK-BMAL1 heterodimers. Involved in heart and limb development by mediating acetylation of TBX5, acetylation regulating nucleocytoplasmic shuttling of TBX5. Acts as a negative regulator of centrosome amplification by mediating acetylation of PLK4. Acetylates RRP9/U3-55K, a core subunit of the U3 snoRNP complex, impairing pre-rRNA processing. Acetylates MAPRE1/EB1, promoting dynamic kinetochore-microtubule interactions in early mitosis. Also acetylates spermidine.</text>
</comment>
<comment type="catalytic activity">
    <reaction evidence="2">
        <text>L-lysyl-[histone] + acetyl-CoA = N(6)-acetyl-L-lysyl-[histone] + CoA + H(+)</text>
        <dbReference type="Rhea" id="RHEA:21992"/>
        <dbReference type="Rhea" id="RHEA-COMP:9845"/>
        <dbReference type="Rhea" id="RHEA-COMP:11338"/>
        <dbReference type="ChEBI" id="CHEBI:15378"/>
        <dbReference type="ChEBI" id="CHEBI:29969"/>
        <dbReference type="ChEBI" id="CHEBI:57287"/>
        <dbReference type="ChEBI" id="CHEBI:57288"/>
        <dbReference type="ChEBI" id="CHEBI:61930"/>
        <dbReference type="EC" id="2.3.1.48"/>
    </reaction>
    <physiologicalReaction direction="left-to-right" evidence="2">
        <dbReference type="Rhea" id="RHEA:21993"/>
    </physiologicalReaction>
</comment>
<comment type="catalytic activity">
    <reaction evidence="2">
        <text>L-lysyl-[protein] + acetyl-CoA = N(6)-acetyl-L-lysyl-[protein] + CoA + H(+)</text>
        <dbReference type="Rhea" id="RHEA:45948"/>
        <dbReference type="Rhea" id="RHEA-COMP:9752"/>
        <dbReference type="Rhea" id="RHEA-COMP:10731"/>
        <dbReference type="ChEBI" id="CHEBI:15378"/>
        <dbReference type="ChEBI" id="CHEBI:29969"/>
        <dbReference type="ChEBI" id="CHEBI:57287"/>
        <dbReference type="ChEBI" id="CHEBI:57288"/>
        <dbReference type="ChEBI" id="CHEBI:61930"/>
    </reaction>
    <physiologicalReaction direction="left-to-right" evidence="2">
        <dbReference type="Rhea" id="RHEA:45949"/>
    </physiologicalReaction>
</comment>
<comment type="catalytic activity">
    <reaction evidence="2">
        <text>spermidine + acetyl-CoA = N(8)-acetylspermidine + CoA + H(+)</text>
        <dbReference type="Rhea" id="RHEA:28270"/>
        <dbReference type="ChEBI" id="CHEBI:15378"/>
        <dbReference type="ChEBI" id="CHEBI:57287"/>
        <dbReference type="ChEBI" id="CHEBI:57288"/>
        <dbReference type="ChEBI" id="CHEBI:57834"/>
        <dbReference type="ChEBI" id="CHEBI:58535"/>
        <dbReference type="EC" id="2.3.1.57"/>
    </reaction>
    <physiologicalReaction direction="left-to-right" evidence="2">
        <dbReference type="Rhea" id="RHEA:28271"/>
    </physiologicalReaction>
</comment>
<comment type="subunit">
    <text evidence="2 7 8 9 10">Interacts with BCAS3. Interacts with SIRT1. Interacts with EP300, CREBBP and DDX17. Component of a large chromatin remodeling complex, at least composed of MYSM1, KAT2B/PCAF, RBM10 and KIF11/TRIP5. Interacts with KLF1; the interaction does not acetylate KLF1 and there is no enhancement of its transactivational activity. Interacts with NFE4. Interacts with MECOM. Interacts with NR2C2 (hypophosphorylated and unsumoylated form); the interaction promotes the transactivation activity of NR2C2. Interacts with NFE4. Interacts with MECOM. Interacts with E2F1; the interaction acetylates E2F1 augmenting its DNA-binding and transcriptional activity. Interacts with NPAS2, BMAL1 and CLOCK (By similarity). Interacts (unsumoylated form) with NR2C1; the interaction promotes transactivation activity. Interacts with CEBPB (By similarity). Interacts with NR4A3 (PubMed:12709428). Interacts with TBX5 (By similarity). Interacts with PLK4 (By similarity). Interacts with RB1; this interaction leads to RB1 acetylation (PubMed:20940255). Interacts with VRK1 (By similarity).</text>
</comment>
<comment type="interaction">
    <interactant intactId="EBI-2325611">
        <id>Q9JHD1</id>
    </interactant>
    <interactant intactId="EBI-15617004">
        <id>Q505F1</id>
        <label>Nr2c1</label>
    </interactant>
    <organismsDiffer>false</organismsDiffer>
    <experiments>3</experiments>
</comment>
<comment type="subcellular location">
    <subcellularLocation>
        <location evidence="2">Nucleus</location>
    </subcellularLocation>
    <subcellularLocation>
        <location evidence="2">Cytoplasm</location>
        <location evidence="2">Cytoskeleton</location>
        <location evidence="2">Microtubule organizing center</location>
        <location evidence="2">Centrosome</location>
    </subcellularLocation>
    <text evidence="2">Mainly localizes to the nucleus. Also localizes to centrosomes in late G1 and around the G1/S transition, coinciding with the onset of centriole formation. Localizes to sites of DNA damage.</text>
</comment>
<comment type="developmental stage">
    <text evidence="6">Expression is low during embryogenesis and becomes up-regulated in some adult tissues including heart and skeletal muscle.</text>
</comment>
<comment type="disruption phenotype">
    <text evidence="6">No visible phenotype (PubMed:11017084).</text>
</comment>
<comment type="similarity">
    <text evidence="12">Belongs to the acetyltransferase family. GCN5 subfamily.</text>
</comment>
<evidence type="ECO:0000250" key="1">
    <source>
        <dbReference type="UniProtKB" id="Q92830"/>
    </source>
</evidence>
<evidence type="ECO:0000250" key="2">
    <source>
        <dbReference type="UniProtKB" id="Q92831"/>
    </source>
</evidence>
<evidence type="ECO:0000255" key="3">
    <source>
        <dbReference type="PROSITE-ProRule" id="PRU00035"/>
    </source>
</evidence>
<evidence type="ECO:0000255" key="4">
    <source>
        <dbReference type="PROSITE-ProRule" id="PRU00532"/>
    </source>
</evidence>
<evidence type="ECO:0000256" key="5">
    <source>
        <dbReference type="SAM" id="MobiDB-lite"/>
    </source>
</evidence>
<evidence type="ECO:0000269" key="6">
    <source>
    </source>
</evidence>
<evidence type="ECO:0000269" key="7">
    <source>
    </source>
</evidence>
<evidence type="ECO:0000269" key="8">
    <source>
    </source>
</evidence>
<evidence type="ECO:0000269" key="9">
    <source>
    </source>
</evidence>
<evidence type="ECO:0000269" key="10">
    <source>
    </source>
</evidence>
<evidence type="ECO:0000303" key="11">
    <source>
    </source>
</evidence>
<evidence type="ECO:0000305" key="12"/>
<evidence type="ECO:0000312" key="13">
    <source>
        <dbReference type="MGI" id="MGI:1343094"/>
    </source>
</evidence>
<evidence type="ECO:0007829" key="14">
    <source>
        <dbReference type="PDB" id="5ML0"/>
    </source>
</evidence>
<proteinExistence type="evidence at protein level"/>
<reference key="1">
    <citation type="journal article" date="1998" name="Mol. Cell. Biol.">
        <title>Mammalian GCN5 and P/CAF acetyltransferases have homologous amino-terminal domains important for recognition of nucleosomal substrates.</title>
        <authorList>
            <person name="Xu W."/>
            <person name="Edmondson D.G."/>
            <person name="Roth S.Y."/>
        </authorList>
    </citation>
    <scope>NUCLEOTIDE SEQUENCE [MRNA]</scope>
</reference>
<reference key="2">
    <citation type="journal article" date="2005" name="Science">
        <title>The transcriptional landscape of the mammalian genome.</title>
        <authorList>
            <person name="Carninci P."/>
            <person name="Kasukawa T."/>
            <person name="Katayama S."/>
            <person name="Gough J."/>
            <person name="Frith M.C."/>
            <person name="Maeda N."/>
            <person name="Oyama R."/>
            <person name="Ravasi T."/>
            <person name="Lenhard B."/>
            <person name="Wells C."/>
            <person name="Kodzius R."/>
            <person name="Shimokawa K."/>
            <person name="Bajic V.B."/>
            <person name="Brenner S.E."/>
            <person name="Batalov S."/>
            <person name="Forrest A.R."/>
            <person name="Zavolan M."/>
            <person name="Davis M.J."/>
            <person name="Wilming L.G."/>
            <person name="Aidinis V."/>
            <person name="Allen J.E."/>
            <person name="Ambesi-Impiombato A."/>
            <person name="Apweiler R."/>
            <person name="Aturaliya R.N."/>
            <person name="Bailey T.L."/>
            <person name="Bansal M."/>
            <person name="Baxter L."/>
            <person name="Beisel K.W."/>
            <person name="Bersano T."/>
            <person name="Bono H."/>
            <person name="Chalk A.M."/>
            <person name="Chiu K.P."/>
            <person name="Choudhary V."/>
            <person name="Christoffels A."/>
            <person name="Clutterbuck D.R."/>
            <person name="Crowe M.L."/>
            <person name="Dalla E."/>
            <person name="Dalrymple B.P."/>
            <person name="de Bono B."/>
            <person name="Della Gatta G."/>
            <person name="di Bernardo D."/>
            <person name="Down T."/>
            <person name="Engstrom P."/>
            <person name="Fagiolini M."/>
            <person name="Faulkner G."/>
            <person name="Fletcher C.F."/>
            <person name="Fukushima T."/>
            <person name="Furuno M."/>
            <person name="Futaki S."/>
            <person name="Gariboldi M."/>
            <person name="Georgii-Hemming P."/>
            <person name="Gingeras T.R."/>
            <person name="Gojobori T."/>
            <person name="Green R.E."/>
            <person name="Gustincich S."/>
            <person name="Harbers M."/>
            <person name="Hayashi Y."/>
            <person name="Hensch T.K."/>
            <person name="Hirokawa N."/>
            <person name="Hill D."/>
            <person name="Huminiecki L."/>
            <person name="Iacono M."/>
            <person name="Ikeo K."/>
            <person name="Iwama A."/>
            <person name="Ishikawa T."/>
            <person name="Jakt M."/>
            <person name="Kanapin A."/>
            <person name="Katoh M."/>
            <person name="Kawasawa Y."/>
            <person name="Kelso J."/>
            <person name="Kitamura H."/>
            <person name="Kitano H."/>
            <person name="Kollias G."/>
            <person name="Krishnan S.P."/>
            <person name="Kruger A."/>
            <person name="Kummerfeld S.K."/>
            <person name="Kurochkin I.V."/>
            <person name="Lareau L.F."/>
            <person name="Lazarevic D."/>
            <person name="Lipovich L."/>
            <person name="Liu J."/>
            <person name="Liuni S."/>
            <person name="McWilliam S."/>
            <person name="Madan Babu M."/>
            <person name="Madera M."/>
            <person name="Marchionni L."/>
            <person name="Matsuda H."/>
            <person name="Matsuzawa S."/>
            <person name="Miki H."/>
            <person name="Mignone F."/>
            <person name="Miyake S."/>
            <person name="Morris K."/>
            <person name="Mottagui-Tabar S."/>
            <person name="Mulder N."/>
            <person name="Nakano N."/>
            <person name="Nakauchi H."/>
            <person name="Ng P."/>
            <person name="Nilsson R."/>
            <person name="Nishiguchi S."/>
            <person name="Nishikawa S."/>
            <person name="Nori F."/>
            <person name="Ohara O."/>
            <person name="Okazaki Y."/>
            <person name="Orlando V."/>
            <person name="Pang K.C."/>
            <person name="Pavan W.J."/>
            <person name="Pavesi G."/>
            <person name="Pesole G."/>
            <person name="Petrovsky N."/>
            <person name="Piazza S."/>
            <person name="Reed J."/>
            <person name="Reid J.F."/>
            <person name="Ring B.Z."/>
            <person name="Ringwald M."/>
            <person name="Rost B."/>
            <person name="Ruan Y."/>
            <person name="Salzberg S.L."/>
            <person name="Sandelin A."/>
            <person name="Schneider C."/>
            <person name="Schoenbach C."/>
            <person name="Sekiguchi K."/>
            <person name="Semple C.A."/>
            <person name="Seno S."/>
            <person name="Sessa L."/>
            <person name="Sheng Y."/>
            <person name="Shibata Y."/>
            <person name="Shimada H."/>
            <person name="Shimada K."/>
            <person name="Silva D."/>
            <person name="Sinclair B."/>
            <person name="Sperling S."/>
            <person name="Stupka E."/>
            <person name="Sugiura K."/>
            <person name="Sultana R."/>
            <person name="Takenaka Y."/>
            <person name="Taki K."/>
            <person name="Tammoja K."/>
            <person name="Tan S.L."/>
            <person name="Tang S."/>
            <person name="Taylor M.S."/>
            <person name="Tegner J."/>
            <person name="Teichmann S.A."/>
            <person name="Ueda H.R."/>
            <person name="van Nimwegen E."/>
            <person name="Verardo R."/>
            <person name="Wei C.L."/>
            <person name="Yagi K."/>
            <person name="Yamanishi H."/>
            <person name="Zabarovsky E."/>
            <person name="Zhu S."/>
            <person name="Zimmer A."/>
            <person name="Hide W."/>
            <person name="Bult C."/>
            <person name="Grimmond S.M."/>
            <person name="Teasdale R.D."/>
            <person name="Liu E.T."/>
            <person name="Brusic V."/>
            <person name="Quackenbush J."/>
            <person name="Wahlestedt C."/>
            <person name="Mattick J.S."/>
            <person name="Hume D.A."/>
            <person name="Kai C."/>
            <person name="Sasaki D."/>
            <person name="Tomaru Y."/>
            <person name="Fukuda S."/>
            <person name="Kanamori-Katayama M."/>
            <person name="Suzuki M."/>
            <person name="Aoki J."/>
            <person name="Arakawa T."/>
            <person name="Iida J."/>
            <person name="Imamura K."/>
            <person name="Itoh M."/>
            <person name="Kato T."/>
            <person name="Kawaji H."/>
            <person name="Kawagashira N."/>
            <person name="Kawashima T."/>
            <person name="Kojima M."/>
            <person name="Kondo S."/>
            <person name="Konno H."/>
            <person name="Nakano K."/>
            <person name="Ninomiya N."/>
            <person name="Nishio T."/>
            <person name="Okada M."/>
            <person name="Plessy C."/>
            <person name="Shibata K."/>
            <person name="Shiraki T."/>
            <person name="Suzuki S."/>
            <person name="Tagami M."/>
            <person name="Waki K."/>
            <person name="Watahiki A."/>
            <person name="Okamura-Oho Y."/>
            <person name="Suzuki H."/>
            <person name="Kawai J."/>
            <person name="Hayashizaki Y."/>
        </authorList>
    </citation>
    <scope>NUCLEOTIDE SEQUENCE [LARGE SCALE MRNA]</scope>
    <source>
        <strain>NOD</strain>
        <tissue>Spleen</tissue>
    </source>
</reference>
<reference key="3">
    <citation type="journal article" date="2004" name="Genome Res.">
        <title>The status, quality, and expansion of the NIH full-length cDNA project: the Mammalian Gene Collection (MGC).</title>
        <authorList>
            <consortium name="The MGC Project Team"/>
        </authorList>
    </citation>
    <scope>NUCLEOTIDE SEQUENCE [LARGE SCALE MRNA]</scope>
    <source>
        <strain>C57BL/6J</strain>
        <tissue>Brain</tissue>
        <tissue>Eye</tissue>
    </source>
</reference>
<reference key="4">
    <citation type="journal article" date="2000" name="Nat. Genet.">
        <title>Loss of Gcn5l2 leads to increased apoptosis and mesodermal defects during mouse development.</title>
        <authorList>
            <person name="Xu W."/>
            <person name="Edmondson D.G."/>
            <person name="Evrard Y.A."/>
            <person name="Wakamiya M."/>
            <person name="Behringer R.R."/>
            <person name="Roth S.Y."/>
        </authorList>
    </citation>
    <scope>DEVELOPMENTAL STAGE</scope>
    <scope>DISRUPTION PHENOTYPE</scope>
</reference>
<reference key="5">
    <citation type="journal article" date="2003" name="J. Biol. Chem.">
        <title>The AF-1 domain of the orphan nuclear receptor NOR-1 mediates trans-activation, coactivator recruitment, and activation by the purine anti-metabolite 6-mercaptopurine.</title>
        <authorList>
            <person name="Wansa K.D."/>
            <person name="Harris J.M."/>
            <person name="Yan G."/>
            <person name="Ordentlich P."/>
            <person name="Muscat G.E."/>
        </authorList>
    </citation>
    <scope>INTERACTION WITH NR4A3</scope>
</reference>
<reference key="6">
    <citation type="journal article" date="2007" name="Nat. Struct. Mol. Biol.">
        <title>SUMOylation of Tr2 orphan receptor involves Pml and fine-tunes Oct4 expression in stem cells.</title>
        <authorList>
            <person name="Park S.W."/>
            <person name="Hu X."/>
            <person name="Gupta P."/>
            <person name="Lin Y.P."/>
            <person name="Ha S.G."/>
            <person name="Wei L.N."/>
        </authorList>
    </citation>
    <scope>INTERACTION WITH NR2C1</scope>
</reference>
<reference key="7">
    <citation type="journal article" date="2008" name="Proc. Natl. Acad. Sci. U.S.A.">
        <title>Retinoic acid-stimulated sequential phosphorylation, PML recruitment, and SUMOylation of nuclear receptor TR2 to suppress Oct4 expression.</title>
        <authorList>
            <person name="Gupta P."/>
            <person name="Ho P.C."/>
            <person name="Huq M.M."/>
            <person name="Ha S.G."/>
            <person name="Park S.W."/>
            <person name="Khan A.A."/>
            <person name="Tsai N.P."/>
            <person name="Wei L.N."/>
        </authorList>
    </citation>
    <scope>INTERACTION WITH NR2C1</scope>
</reference>
<reference key="8">
    <citation type="journal article" date="2010" name="J. Cell Sci.">
        <title>Acetylation of Rb by PCAF is required for nuclear localization and keratinocyte differentiation.</title>
        <authorList>
            <person name="Pickard A."/>
            <person name="Wong P.P."/>
            <person name="McCance D.J."/>
        </authorList>
    </citation>
    <scope>INTERACTION WITH RB1</scope>
</reference>
<dbReference type="EC" id="2.3.1.48" evidence="2"/>
<dbReference type="EC" id="2.3.1.57" evidence="2"/>
<dbReference type="EMBL" id="AF254442">
    <property type="protein sequence ID" value="AAF70498.1"/>
    <property type="molecule type" value="mRNA"/>
</dbReference>
<dbReference type="EMBL" id="AK156290">
    <property type="protein sequence ID" value="BAE33658.1"/>
    <property type="molecule type" value="mRNA"/>
</dbReference>
<dbReference type="EMBL" id="BC082581">
    <property type="protein sequence ID" value="AAH82581.1"/>
    <property type="molecule type" value="mRNA"/>
</dbReference>
<dbReference type="EMBL" id="BC145896">
    <property type="protein sequence ID" value="AAI45897.1"/>
    <property type="molecule type" value="mRNA"/>
</dbReference>
<dbReference type="CCDS" id="CCDS28880.1"/>
<dbReference type="RefSeq" id="NP_064389.2">
    <property type="nucleotide sequence ID" value="NM_020005.4"/>
</dbReference>
<dbReference type="PDB" id="5ML0">
    <property type="method" value="X-ray"/>
    <property type="resolution" value="1.64 A"/>
    <property type="chains" value="A=705-813"/>
</dbReference>
<dbReference type="PDBsum" id="5ML0"/>
<dbReference type="SMR" id="Q9JHD1"/>
<dbReference type="BioGRID" id="202042">
    <property type="interactions" value="23"/>
</dbReference>
<dbReference type="ComplexPortal" id="CPX-1024">
    <property type="entry name" value="PCAF histone acetylase complex"/>
</dbReference>
<dbReference type="ComplexPortal" id="CPX-1029">
    <property type="entry name" value="PCAF-containing ATAC complex"/>
</dbReference>
<dbReference type="ComplexPortal" id="CPX-6803">
    <property type="entry name" value="SAGA complex, KAT2B variant"/>
</dbReference>
<dbReference type="CORUM" id="Q9JHD1"/>
<dbReference type="DIP" id="DIP-29281N"/>
<dbReference type="FunCoup" id="Q9JHD1">
    <property type="interactions" value="887"/>
</dbReference>
<dbReference type="IntAct" id="Q9JHD1">
    <property type="interactions" value="4"/>
</dbReference>
<dbReference type="MINT" id="Q9JHD1"/>
<dbReference type="STRING" id="10090.ENSMUSP00000000724"/>
<dbReference type="GlyGen" id="Q9JHD1">
    <property type="glycosylation" value="2 sites, 1 O-linked glycan (1 site)"/>
</dbReference>
<dbReference type="iPTMnet" id="Q9JHD1"/>
<dbReference type="PhosphoSitePlus" id="Q9JHD1"/>
<dbReference type="jPOST" id="Q9JHD1"/>
<dbReference type="PaxDb" id="10090-ENSMUSP00000000724"/>
<dbReference type="ProteomicsDB" id="263573"/>
<dbReference type="Pumba" id="Q9JHD1"/>
<dbReference type="Antibodypedia" id="3865">
    <property type="antibodies" value="468 antibodies from 39 providers"/>
</dbReference>
<dbReference type="DNASU" id="18519"/>
<dbReference type="Ensembl" id="ENSMUST00000000724.15">
    <property type="protein sequence ID" value="ENSMUSP00000000724.9"/>
    <property type="gene ID" value="ENSMUSG00000000708.15"/>
</dbReference>
<dbReference type="GeneID" id="18519"/>
<dbReference type="KEGG" id="mmu:18519"/>
<dbReference type="UCSC" id="uc008czp.2">
    <property type="organism name" value="mouse"/>
</dbReference>
<dbReference type="AGR" id="MGI:1343094"/>
<dbReference type="CTD" id="8850"/>
<dbReference type="MGI" id="MGI:1343094">
    <property type="gene designation" value="Kat2b"/>
</dbReference>
<dbReference type="VEuPathDB" id="HostDB:ENSMUSG00000000708"/>
<dbReference type="eggNOG" id="KOG1472">
    <property type="taxonomic scope" value="Eukaryota"/>
</dbReference>
<dbReference type="GeneTree" id="ENSGT00940000154995"/>
<dbReference type="HOGENOM" id="CLU_015901_0_0_1"/>
<dbReference type="InParanoid" id="Q9JHD1"/>
<dbReference type="OMA" id="YFQTKMR"/>
<dbReference type="OrthoDB" id="1937912at2759"/>
<dbReference type="PhylomeDB" id="Q9JHD1"/>
<dbReference type="TreeFam" id="TF105399"/>
<dbReference type="BRENDA" id="2.3.1.48">
    <property type="organism ID" value="3474"/>
</dbReference>
<dbReference type="Reactome" id="R-MMU-2032785">
    <property type="pathway name" value="YAP1- and WWTR1 (TAZ)-stimulated gene expression"/>
</dbReference>
<dbReference type="Reactome" id="R-MMU-2122947">
    <property type="pathway name" value="NOTCH1 Intracellular Domain Regulates Transcription"/>
</dbReference>
<dbReference type="Reactome" id="R-MMU-350054">
    <property type="pathway name" value="Notch-HLH transcription pathway"/>
</dbReference>
<dbReference type="Reactome" id="R-MMU-5250924">
    <property type="pathway name" value="B-WICH complex positively regulates rRNA expression"/>
</dbReference>
<dbReference type="Reactome" id="R-MMU-5689901">
    <property type="pathway name" value="Metalloprotease DUBs"/>
</dbReference>
<dbReference type="Reactome" id="R-MMU-8936459">
    <property type="pathway name" value="RUNX1 regulates genes involved in megakaryocyte differentiation and platelet function"/>
</dbReference>
<dbReference type="Reactome" id="R-MMU-8941856">
    <property type="pathway name" value="RUNX3 regulates NOTCH signaling"/>
</dbReference>
<dbReference type="Reactome" id="R-MMU-9018519">
    <property type="pathway name" value="Estrogen-dependent gene expression"/>
</dbReference>
<dbReference type="Reactome" id="R-MMU-9617629">
    <property type="pathway name" value="Regulation of FOXO transcriptional activity by acetylation"/>
</dbReference>
<dbReference type="Reactome" id="R-MMU-9772755">
    <property type="pathway name" value="Formation of WDR5-containing histone-modifying complexes"/>
</dbReference>
<dbReference type="BioGRID-ORCS" id="18519">
    <property type="hits" value="0 hits in 82 CRISPR screens"/>
</dbReference>
<dbReference type="ChiTaRS" id="Kat2b">
    <property type="organism name" value="mouse"/>
</dbReference>
<dbReference type="PRO" id="PR:Q9JHD1"/>
<dbReference type="Proteomes" id="UP000000589">
    <property type="component" value="Chromosome 17"/>
</dbReference>
<dbReference type="RNAct" id="Q9JHD1">
    <property type="molecule type" value="protein"/>
</dbReference>
<dbReference type="Bgee" id="ENSMUSG00000000708">
    <property type="expression patterns" value="Expressed in pigmented layer of retina and 265 other cell types or tissues"/>
</dbReference>
<dbReference type="ExpressionAtlas" id="Q9JHD1">
    <property type="expression patterns" value="baseline and differential"/>
</dbReference>
<dbReference type="GO" id="GO:0031672">
    <property type="term" value="C:A band"/>
    <property type="evidence" value="ECO:0000314"/>
    <property type="project" value="MGI"/>
</dbReference>
<dbReference type="GO" id="GO:0042641">
    <property type="term" value="C:actomyosin"/>
    <property type="evidence" value="ECO:0000314"/>
    <property type="project" value="MGI"/>
</dbReference>
<dbReference type="GO" id="GO:0140672">
    <property type="term" value="C:ATAC complex"/>
    <property type="evidence" value="ECO:0000314"/>
    <property type="project" value="MGI"/>
</dbReference>
<dbReference type="GO" id="GO:0005813">
    <property type="term" value="C:centrosome"/>
    <property type="evidence" value="ECO:0000250"/>
    <property type="project" value="UniProtKB"/>
</dbReference>
<dbReference type="GO" id="GO:0005829">
    <property type="term" value="C:cytosol"/>
    <property type="evidence" value="ECO:0007669"/>
    <property type="project" value="Ensembl"/>
</dbReference>
<dbReference type="GO" id="GO:0000123">
    <property type="term" value="C:histone acetyltransferase complex"/>
    <property type="evidence" value="ECO:0000314"/>
    <property type="project" value="MGI"/>
</dbReference>
<dbReference type="GO" id="GO:0031674">
    <property type="term" value="C:I band"/>
    <property type="evidence" value="ECO:0000314"/>
    <property type="project" value="MGI"/>
</dbReference>
<dbReference type="GO" id="GO:0000776">
    <property type="term" value="C:kinetochore"/>
    <property type="evidence" value="ECO:0000314"/>
    <property type="project" value="MGI"/>
</dbReference>
<dbReference type="GO" id="GO:0072686">
    <property type="term" value="C:mitotic spindle"/>
    <property type="evidence" value="ECO:0000303"/>
    <property type="project" value="ComplexPortal"/>
</dbReference>
<dbReference type="GO" id="GO:0005654">
    <property type="term" value="C:nucleoplasm"/>
    <property type="evidence" value="ECO:0000304"/>
    <property type="project" value="Reactome"/>
</dbReference>
<dbReference type="GO" id="GO:0005634">
    <property type="term" value="C:nucleus"/>
    <property type="evidence" value="ECO:0000314"/>
    <property type="project" value="UniProtKB"/>
</dbReference>
<dbReference type="GO" id="GO:0000124">
    <property type="term" value="C:SAGA complex"/>
    <property type="evidence" value="ECO:0000303"/>
    <property type="project" value="ComplexPortal"/>
</dbReference>
<dbReference type="GO" id="GO:0016407">
    <property type="term" value="F:acetyltransferase activity"/>
    <property type="evidence" value="ECO:0000269"/>
    <property type="project" value="Reactome"/>
</dbReference>
<dbReference type="GO" id="GO:0003682">
    <property type="term" value="F:chromatin binding"/>
    <property type="evidence" value="ECO:0000314"/>
    <property type="project" value="UniProtKB"/>
</dbReference>
<dbReference type="GO" id="GO:0004861">
    <property type="term" value="F:cyclin-dependent protein serine/threonine kinase inhibitor activity"/>
    <property type="evidence" value="ECO:0000314"/>
    <property type="project" value="UniProtKB"/>
</dbReference>
<dbReference type="GO" id="GO:0004145">
    <property type="term" value="F:diamine N-acetyltransferase activity"/>
    <property type="evidence" value="ECO:0007669"/>
    <property type="project" value="UniProtKB-EC"/>
</dbReference>
<dbReference type="GO" id="GO:0140297">
    <property type="term" value="F:DNA-binding transcription factor binding"/>
    <property type="evidence" value="ECO:0007669"/>
    <property type="project" value="Ensembl"/>
</dbReference>
<dbReference type="GO" id="GO:0004402">
    <property type="term" value="F:histone acetyltransferase activity"/>
    <property type="evidence" value="ECO:0000314"/>
    <property type="project" value="MGI"/>
</dbReference>
<dbReference type="GO" id="GO:0035035">
    <property type="term" value="F:histone acetyltransferase binding"/>
    <property type="evidence" value="ECO:0007669"/>
    <property type="project" value="Ensembl"/>
</dbReference>
<dbReference type="GO" id="GO:0042826">
    <property type="term" value="F:histone deacetylase binding"/>
    <property type="evidence" value="ECO:0007669"/>
    <property type="project" value="Ensembl"/>
</dbReference>
<dbReference type="GO" id="GO:0043992">
    <property type="term" value="F:histone H3K9 acetyltransferase activity"/>
    <property type="evidence" value="ECO:0000316"/>
    <property type="project" value="MGI"/>
</dbReference>
<dbReference type="GO" id="GO:0004468">
    <property type="term" value="F:L-lysine N-acetyltransferase activity, acting on acetyl phosphate as donor"/>
    <property type="evidence" value="ECO:0000314"/>
    <property type="project" value="UniProtKB"/>
</dbReference>
<dbReference type="GO" id="GO:0019901">
    <property type="term" value="F:protein kinase binding"/>
    <property type="evidence" value="ECO:0000353"/>
    <property type="project" value="UniProtKB"/>
</dbReference>
<dbReference type="GO" id="GO:0061733">
    <property type="term" value="F:protein-lysine-acetyltransferase activity"/>
    <property type="evidence" value="ECO:0000314"/>
    <property type="project" value="MGI"/>
</dbReference>
<dbReference type="GO" id="GO:0000977">
    <property type="term" value="F:RNA polymerase II transcription regulatory region sequence-specific DNA binding"/>
    <property type="evidence" value="ECO:0000314"/>
    <property type="project" value="MGI"/>
</dbReference>
<dbReference type="GO" id="GO:0003713">
    <property type="term" value="F:transcription coactivator activity"/>
    <property type="evidence" value="ECO:0000314"/>
    <property type="project" value="MGI"/>
</dbReference>
<dbReference type="GO" id="GO:0032869">
    <property type="term" value="P:cellular response to insulin stimulus"/>
    <property type="evidence" value="ECO:0007669"/>
    <property type="project" value="Ensembl"/>
</dbReference>
<dbReference type="GO" id="GO:0034599">
    <property type="term" value="P:cellular response to oxidative stress"/>
    <property type="evidence" value="ECO:0007669"/>
    <property type="project" value="Ensembl"/>
</dbReference>
<dbReference type="GO" id="GO:0071374">
    <property type="term" value="P:cellular response to parathyroid hormone stimulus"/>
    <property type="evidence" value="ECO:0007669"/>
    <property type="project" value="Ensembl"/>
</dbReference>
<dbReference type="GO" id="GO:0006338">
    <property type="term" value="P:chromatin remodeling"/>
    <property type="evidence" value="ECO:0000250"/>
    <property type="project" value="UniProtKB"/>
</dbReference>
<dbReference type="GO" id="GO:0006094">
    <property type="term" value="P:gluconeogenesis"/>
    <property type="evidence" value="ECO:0000316"/>
    <property type="project" value="MGI"/>
</dbReference>
<dbReference type="GO" id="GO:0007507">
    <property type="term" value="P:heart development"/>
    <property type="evidence" value="ECO:0000250"/>
    <property type="project" value="UniProtKB"/>
</dbReference>
<dbReference type="GO" id="GO:0018393">
    <property type="term" value="P:internal peptidyl-lysine acetylation"/>
    <property type="evidence" value="ECO:0000315"/>
    <property type="project" value="UniProtKB"/>
</dbReference>
<dbReference type="GO" id="GO:0060173">
    <property type="term" value="P:limb development"/>
    <property type="evidence" value="ECO:0000250"/>
    <property type="project" value="UniProtKB"/>
</dbReference>
<dbReference type="GO" id="GO:0007613">
    <property type="term" value="P:memory"/>
    <property type="evidence" value="ECO:0007669"/>
    <property type="project" value="Ensembl"/>
</dbReference>
<dbReference type="GO" id="GO:0008285">
    <property type="term" value="P:negative regulation of cell population proliferation"/>
    <property type="evidence" value="ECO:0007669"/>
    <property type="project" value="Ensembl"/>
</dbReference>
<dbReference type="GO" id="GO:0046600">
    <property type="term" value="P:negative regulation of centriole replication"/>
    <property type="evidence" value="ECO:0000250"/>
    <property type="project" value="UniProtKB"/>
</dbReference>
<dbReference type="GO" id="GO:0045736">
    <property type="term" value="P:negative regulation of cyclin-dependent protein serine/threonine kinase activity"/>
    <property type="evidence" value="ECO:0000314"/>
    <property type="project" value="UniProtKB"/>
</dbReference>
<dbReference type="GO" id="GO:2000233">
    <property type="term" value="P:negative regulation of rRNA processing"/>
    <property type="evidence" value="ECO:0000250"/>
    <property type="project" value="UniProtKB"/>
</dbReference>
<dbReference type="GO" id="GO:0000122">
    <property type="term" value="P:negative regulation of transcription by RNA polymerase II"/>
    <property type="evidence" value="ECO:0007669"/>
    <property type="project" value="Ensembl"/>
</dbReference>
<dbReference type="GO" id="GO:1902425">
    <property type="term" value="P:positive regulation of attachment of mitotic spindle microtubules to kinetochore"/>
    <property type="evidence" value="ECO:0000250"/>
    <property type="project" value="UniProtKB"/>
</dbReference>
<dbReference type="GO" id="GO:0045893">
    <property type="term" value="P:positive regulation of DNA-templated transcription"/>
    <property type="evidence" value="ECO:0000314"/>
    <property type="project" value="MGI"/>
</dbReference>
<dbReference type="GO" id="GO:0045723">
    <property type="term" value="P:positive regulation of fatty acid biosynthetic process"/>
    <property type="evidence" value="ECO:0007669"/>
    <property type="project" value="Ensembl"/>
</dbReference>
<dbReference type="GO" id="GO:0045722">
    <property type="term" value="P:positive regulation of gluconeogenesis"/>
    <property type="evidence" value="ECO:0000316"/>
    <property type="project" value="MGI"/>
</dbReference>
<dbReference type="GO" id="GO:0045821">
    <property type="term" value="P:positive regulation of glycolytic process"/>
    <property type="evidence" value="ECO:0000314"/>
    <property type="project" value="MGI"/>
</dbReference>
<dbReference type="GO" id="GO:0046889">
    <property type="term" value="P:positive regulation of lipid biosynthetic process"/>
    <property type="evidence" value="ECO:0000314"/>
    <property type="project" value="MGI"/>
</dbReference>
<dbReference type="GO" id="GO:0010976">
    <property type="term" value="P:positive regulation of neuron projection development"/>
    <property type="evidence" value="ECO:0007669"/>
    <property type="project" value="Ensembl"/>
</dbReference>
<dbReference type="GO" id="GO:0045944">
    <property type="term" value="P:positive regulation of transcription by RNA polymerase II"/>
    <property type="evidence" value="ECO:0000316"/>
    <property type="project" value="MGI"/>
</dbReference>
<dbReference type="GO" id="GO:0000432">
    <property type="term" value="P:positive regulation of transcription from RNA polymerase II promoter by glucose"/>
    <property type="evidence" value="ECO:0000314"/>
    <property type="project" value="MGI"/>
</dbReference>
<dbReference type="GO" id="GO:0051726">
    <property type="term" value="P:regulation of cell cycle"/>
    <property type="evidence" value="ECO:0000250"/>
    <property type="project" value="ComplexPortal"/>
</dbReference>
<dbReference type="GO" id="GO:0051302">
    <property type="term" value="P:regulation of cell division"/>
    <property type="evidence" value="ECO:0000250"/>
    <property type="project" value="ComplexPortal"/>
</dbReference>
<dbReference type="GO" id="GO:0006282">
    <property type="term" value="P:regulation of DNA repair"/>
    <property type="evidence" value="ECO:0000303"/>
    <property type="project" value="ComplexPortal"/>
</dbReference>
<dbReference type="GO" id="GO:0006355">
    <property type="term" value="P:regulation of DNA-templated transcription"/>
    <property type="evidence" value="ECO:0000250"/>
    <property type="project" value="ComplexPortal"/>
</dbReference>
<dbReference type="GO" id="GO:0045995">
    <property type="term" value="P:regulation of embryonic development"/>
    <property type="evidence" value="ECO:0000250"/>
    <property type="project" value="ComplexPortal"/>
</dbReference>
<dbReference type="GO" id="GO:0043484">
    <property type="term" value="P:regulation of RNA splicing"/>
    <property type="evidence" value="ECO:0000303"/>
    <property type="project" value="ComplexPortal"/>
</dbReference>
<dbReference type="GO" id="GO:0006357">
    <property type="term" value="P:regulation of transcription by RNA polymerase II"/>
    <property type="evidence" value="ECO:0000250"/>
    <property type="project" value="ComplexPortal"/>
</dbReference>
<dbReference type="GO" id="GO:0048511">
    <property type="term" value="P:rhythmic process"/>
    <property type="evidence" value="ECO:0007669"/>
    <property type="project" value="UniProtKB-KW"/>
</dbReference>
<dbReference type="GO" id="GO:0042311">
    <property type="term" value="P:vasodilation"/>
    <property type="evidence" value="ECO:0007669"/>
    <property type="project" value="Ensembl"/>
</dbReference>
<dbReference type="CDD" id="cd05509">
    <property type="entry name" value="Bromo_gcn5_like"/>
    <property type="match status" value="1"/>
</dbReference>
<dbReference type="CDD" id="cd04301">
    <property type="entry name" value="NAT_SF"/>
    <property type="match status" value="1"/>
</dbReference>
<dbReference type="FunFam" id="3.40.630.30:FF:000004">
    <property type="entry name" value="Histone acetyltransferase KAT2A"/>
    <property type="match status" value="1"/>
</dbReference>
<dbReference type="FunFam" id="1.20.920.10:FF:000014">
    <property type="entry name" value="Histone acetyltransferase KAT2B"/>
    <property type="match status" value="1"/>
</dbReference>
<dbReference type="Gene3D" id="3.40.630.30">
    <property type="match status" value="1"/>
</dbReference>
<dbReference type="Gene3D" id="1.20.920.10">
    <property type="entry name" value="Bromodomain-like"/>
    <property type="match status" value="1"/>
</dbReference>
<dbReference type="InterPro" id="IPR016181">
    <property type="entry name" value="Acyl_CoA_acyltransferase"/>
</dbReference>
<dbReference type="InterPro" id="IPR001487">
    <property type="entry name" value="Bromodomain"/>
</dbReference>
<dbReference type="InterPro" id="IPR036427">
    <property type="entry name" value="Bromodomain-like_sf"/>
</dbReference>
<dbReference type="InterPro" id="IPR018359">
    <property type="entry name" value="Bromodomain_CS"/>
</dbReference>
<dbReference type="InterPro" id="IPR037800">
    <property type="entry name" value="GCN5"/>
</dbReference>
<dbReference type="InterPro" id="IPR016376">
    <property type="entry name" value="GCN5/PCAF"/>
</dbReference>
<dbReference type="InterPro" id="IPR000182">
    <property type="entry name" value="GNAT_dom"/>
</dbReference>
<dbReference type="InterPro" id="IPR009464">
    <property type="entry name" value="PCAF_N"/>
</dbReference>
<dbReference type="PANTHER" id="PTHR45750">
    <property type="entry name" value="GH11602P"/>
    <property type="match status" value="1"/>
</dbReference>
<dbReference type="PANTHER" id="PTHR45750:SF2">
    <property type="entry name" value="HISTONE ACETYLTRANSFERASE KAT2B"/>
    <property type="match status" value="1"/>
</dbReference>
<dbReference type="Pfam" id="PF00583">
    <property type="entry name" value="Acetyltransf_1"/>
    <property type="match status" value="1"/>
</dbReference>
<dbReference type="Pfam" id="PF00439">
    <property type="entry name" value="Bromodomain"/>
    <property type="match status" value="1"/>
</dbReference>
<dbReference type="Pfam" id="PF06466">
    <property type="entry name" value="PCAF_N"/>
    <property type="match status" value="1"/>
</dbReference>
<dbReference type="PIRSF" id="PIRSF003048">
    <property type="entry name" value="Histone_acetylase_PCAF"/>
    <property type="match status" value="1"/>
</dbReference>
<dbReference type="PRINTS" id="PR00503">
    <property type="entry name" value="BROMODOMAIN"/>
</dbReference>
<dbReference type="SMART" id="SM00297">
    <property type="entry name" value="BROMO"/>
    <property type="match status" value="1"/>
</dbReference>
<dbReference type="SUPFAM" id="SSF55729">
    <property type="entry name" value="Acyl-CoA N-acyltransferases (Nat)"/>
    <property type="match status" value="1"/>
</dbReference>
<dbReference type="SUPFAM" id="SSF47370">
    <property type="entry name" value="Bromodomain"/>
    <property type="match status" value="1"/>
</dbReference>
<dbReference type="PROSITE" id="PS00633">
    <property type="entry name" value="BROMODOMAIN_1"/>
    <property type="match status" value="1"/>
</dbReference>
<dbReference type="PROSITE" id="PS50014">
    <property type="entry name" value="BROMODOMAIN_2"/>
    <property type="match status" value="1"/>
</dbReference>
<dbReference type="PROSITE" id="PS51186">
    <property type="entry name" value="GNAT"/>
    <property type="match status" value="1"/>
</dbReference>
<sequence length="813" mass="91769">MAEAGGAGSPALPPAPPHGSPRTLATAAGSSASCGPATAVAAAGTAEGPGGGGSARIAVKKAQLRSAPRAKKLEKLGVYSACKAEESCKCNGWKNPNPSPTPPRGDLQQIIVSLTESCRSCSHALAAHVSHLENVSEEEMDRLLGIVLDVEYLFTCVHKEEDADTKQVYFYLFKLLRKSILQRGKPVVEGSLEKKPPFEKPSIEQGVNNFVQYKFSHLPSKERQTTIELAKMFLNRINYWHLEAPSQRRLRSPNDDISGYKENYTRWLCYCNVPQFCDSLPRYETTKVFGRTLLRSVFTIMRRQLLEQARQEKDKLPLEKRTLILTHFPKFLSMLEEEVYSQNSPIWDQDFLSASSRTSPLGIQTVISPPVTGTALFSSNSTSHEQINGGRTSPGCRGSSGLEANPGEKRKMNNSHAPEEAKRSRVMGDIPVELINEVMSTITDPAGMLGPETNFLSAHSARDEAARLEERRGVIEFHVVGNSLNQKPNKKILMWLVGLQNVFSHQLPRMPKEYITRLVFDPKHKTLALIKDGRVIGGICFRMFPSQGFTEIVFCAVTSNEQVKGYGTHLMNHLKEYHIKHEILNFLTYADEYAIGYFKKQGFSKEIKIPKTKYVGYIKDYEGATLMGCELNPQIPYTEFSVIIKKQKEIIKKLIERKQAQIRKVYPGLSCFKDGVRQIPIESIPGIRETGWKPSGKEKSKEPKDPEQLYSTLKNILQQVKNHPNAWPFMEPVKRTEAPGYYEVIRFPMDLKTMSERLRNRYYVSKKLFMADLQRVFTNCKEYNPPESEYYKCASILEKFFFSKIKEAGLIDK</sequence>
<accession>Q9JHD1</accession>
<accession>Q3U142</accession>
<accession>Q640M9</accession>
<gene>
    <name evidence="13" type="primary">Kat2b</name>
    <name evidence="11" type="synonym">Pcaf</name>
</gene>